<comment type="function">
    <text evidence="1">Catalyzes the prenylation of para-hydroxybenzoate (PHB) with an all-trans polyprenyl group. Mediates the second step in the final reaction sequence of ubiquinone-8 (UQ-8) biosynthesis, which is the condensation of the polyisoprenoid side chain with PHB, generating the first membrane-bound Q intermediate 3-octaprenyl-4-hydroxybenzoate.</text>
</comment>
<comment type="catalytic activity">
    <reaction evidence="1">
        <text>all-trans-octaprenyl diphosphate + 4-hydroxybenzoate = 4-hydroxy-3-(all-trans-octaprenyl)benzoate + diphosphate</text>
        <dbReference type="Rhea" id="RHEA:27782"/>
        <dbReference type="ChEBI" id="CHEBI:1617"/>
        <dbReference type="ChEBI" id="CHEBI:17879"/>
        <dbReference type="ChEBI" id="CHEBI:33019"/>
        <dbReference type="ChEBI" id="CHEBI:57711"/>
        <dbReference type="EC" id="2.5.1.39"/>
    </reaction>
</comment>
<comment type="cofactor">
    <cofactor evidence="1">
        <name>Mg(2+)</name>
        <dbReference type="ChEBI" id="CHEBI:18420"/>
    </cofactor>
</comment>
<comment type="pathway">
    <text evidence="1">Cofactor biosynthesis; ubiquinone biosynthesis.</text>
</comment>
<comment type="subcellular location">
    <subcellularLocation>
        <location evidence="1">Cell inner membrane</location>
        <topology evidence="1">Multi-pass membrane protein</topology>
    </subcellularLocation>
</comment>
<comment type="similarity">
    <text evidence="1">Belongs to the UbiA prenyltransferase family.</text>
</comment>
<sequence>MKGSTVHTKWQAYCRLMRIDKPIGSLLLLWPTLWALWLAGRGIPEAKILVVFVLGVFFMRAAGCVVNDYADRHIDGFVKRTASRPLPSGTISEKESKILFVVLILLSFGLVLTLNSMTIWLSLAALALAWIYPFMKRVTHLPQVVLGAAFGWSIPMGFAAVSESLPLVCWLLLLANICWTVAYDTQYAMVDRDDDLRIGVKSTAILFGQHDKLIIGLLQLATLLLMVAIGWLMNLGGAFYWSILLAGALFTHQQKMIAQREREPCFRAFLNNNYVGLVLFLGILISYW</sequence>
<protein>
    <recommendedName>
        <fullName evidence="1">4-hydroxybenzoate octaprenyltransferase</fullName>
        <ecNumber evidence="1">2.5.1.39</ecNumber>
    </recommendedName>
    <alternativeName>
        <fullName evidence="1">4-HB polyprenyltransferase</fullName>
    </alternativeName>
</protein>
<dbReference type="EC" id="2.5.1.39" evidence="1"/>
<dbReference type="EMBL" id="CP000305">
    <property type="protein sequence ID" value="ABG19685.1"/>
    <property type="molecule type" value="Genomic_DNA"/>
</dbReference>
<dbReference type="EMBL" id="ACNQ01000017">
    <property type="protein sequence ID" value="EEO75877.1"/>
    <property type="molecule type" value="Genomic_DNA"/>
</dbReference>
<dbReference type="RefSeq" id="WP_002209088.1">
    <property type="nucleotide sequence ID" value="NZ_ACNQ01000017.1"/>
</dbReference>
<dbReference type="SMR" id="Q1CE95"/>
<dbReference type="GeneID" id="57974293"/>
<dbReference type="KEGG" id="ypn:YPN_3358"/>
<dbReference type="HOGENOM" id="CLU_034879_1_0_6"/>
<dbReference type="UniPathway" id="UPA00232"/>
<dbReference type="Proteomes" id="UP000008936">
    <property type="component" value="Chromosome"/>
</dbReference>
<dbReference type="GO" id="GO:0005886">
    <property type="term" value="C:plasma membrane"/>
    <property type="evidence" value="ECO:0007669"/>
    <property type="project" value="UniProtKB-SubCell"/>
</dbReference>
<dbReference type="GO" id="GO:0008412">
    <property type="term" value="F:4-hydroxybenzoate polyprenyltransferase activity"/>
    <property type="evidence" value="ECO:0007669"/>
    <property type="project" value="UniProtKB-UniRule"/>
</dbReference>
<dbReference type="GO" id="GO:0006744">
    <property type="term" value="P:ubiquinone biosynthetic process"/>
    <property type="evidence" value="ECO:0007669"/>
    <property type="project" value="UniProtKB-UniRule"/>
</dbReference>
<dbReference type="CDD" id="cd13959">
    <property type="entry name" value="PT_UbiA_COQ2"/>
    <property type="match status" value="1"/>
</dbReference>
<dbReference type="FunFam" id="1.10.357.140:FF:000002">
    <property type="entry name" value="4-hydroxybenzoate octaprenyltransferase"/>
    <property type="match status" value="1"/>
</dbReference>
<dbReference type="FunFam" id="1.20.120.1780:FF:000001">
    <property type="entry name" value="4-hydroxybenzoate octaprenyltransferase"/>
    <property type="match status" value="1"/>
</dbReference>
<dbReference type="Gene3D" id="1.10.357.140">
    <property type="entry name" value="UbiA prenyltransferase"/>
    <property type="match status" value="1"/>
</dbReference>
<dbReference type="Gene3D" id="1.20.120.1780">
    <property type="entry name" value="UbiA prenyltransferase"/>
    <property type="match status" value="1"/>
</dbReference>
<dbReference type="HAMAP" id="MF_01635">
    <property type="entry name" value="UbiA"/>
    <property type="match status" value="1"/>
</dbReference>
<dbReference type="InterPro" id="IPR006370">
    <property type="entry name" value="HB_polyprenyltransferase-like"/>
</dbReference>
<dbReference type="InterPro" id="IPR039653">
    <property type="entry name" value="Prenyltransferase"/>
</dbReference>
<dbReference type="InterPro" id="IPR000537">
    <property type="entry name" value="UbiA_prenyltransferase"/>
</dbReference>
<dbReference type="InterPro" id="IPR030470">
    <property type="entry name" value="UbiA_prenylTrfase_CS"/>
</dbReference>
<dbReference type="InterPro" id="IPR044878">
    <property type="entry name" value="UbiA_sf"/>
</dbReference>
<dbReference type="NCBIfam" id="TIGR01474">
    <property type="entry name" value="ubiA_proteo"/>
    <property type="match status" value="1"/>
</dbReference>
<dbReference type="PANTHER" id="PTHR11048:SF28">
    <property type="entry name" value="4-HYDROXYBENZOATE POLYPRENYLTRANSFERASE, MITOCHONDRIAL"/>
    <property type="match status" value="1"/>
</dbReference>
<dbReference type="PANTHER" id="PTHR11048">
    <property type="entry name" value="PRENYLTRANSFERASES"/>
    <property type="match status" value="1"/>
</dbReference>
<dbReference type="Pfam" id="PF01040">
    <property type="entry name" value="UbiA"/>
    <property type="match status" value="1"/>
</dbReference>
<dbReference type="PROSITE" id="PS00943">
    <property type="entry name" value="UBIA"/>
    <property type="match status" value="1"/>
</dbReference>
<gene>
    <name evidence="1" type="primary">ubiA</name>
    <name type="ordered locus">YPN_3358</name>
    <name type="ORF">YP516_3816</name>
</gene>
<evidence type="ECO:0000255" key="1">
    <source>
        <dbReference type="HAMAP-Rule" id="MF_01635"/>
    </source>
</evidence>
<accession>Q1CE95</accession>
<accession>C4GY77</accession>
<keyword id="KW-0997">Cell inner membrane</keyword>
<keyword id="KW-1003">Cell membrane</keyword>
<keyword id="KW-0460">Magnesium</keyword>
<keyword id="KW-0472">Membrane</keyword>
<keyword id="KW-0808">Transferase</keyword>
<keyword id="KW-0812">Transmembrane</keyword>
<keyword id="KW-1133">Transmembrane helix</keyword>
<keyword id="KW-0831">Ubiquinone biosynthesis</keyword>
<name>UBIA_YERPN</name>
<feature type="chain" id="PRO_0000262864" description="4-hydroxybenzoate octaprenyltransferase">
    <location>
        <begin position="1"/>
        <end position="288"/>
    </location>
</feature>
<feature type="transmembrane region" description="Helical" evidence="1">
    <location>
        <begin position="23"/>
        <end position="43"/>
    </location>
</feature>
<feature type="transmembrane region" description="Helical" evidence="1">
    <location>
        <begin position="46"/>
        <end position="66"/>
    </location>
</feature>
<feature type="transmembrane region" description="Helical" evidence="1">
    <location>
        <begin position="98"/>
        <end position="118"/>
    </location>
</feature>
<feature type="transmembrane region" description="Helical" evidence="1">
    <location>
        <begin position="141"/>
        <end position="161"/>
    </location>
</feature>
<feature type="transmembrane region" description="Helical" evidence="1">
    <location>
        <begin position="163"/>
        <end position="183"/>
    </location>
</feature>
<feature type="transmembrane region" description="Helical" evidence="1">
    <location>
        <begin position="213"/>
        <end position="233"/>
    </location>
</feature>
<feature type="transmembrane region" description="Helical" evidence="1">
    <location>
        <begin position="234"/>
        <end position="254"/>
    </location>
</feature>
<feature type="transmembrane region" description="Helical" evidence="1">
    <location>
        <begin position="268"/>
        <end position="288"/>
    </location>
</feature>
<organism>
    <name type="scientific">Yersinia pestis bv. Antiqua (strain Nepal516)</name>
    <dbReference type="NCBI Taxonomy" id="377628"/>
    <lineage>
        <taxon>Bacteria</taxon>
        <taxon>Pseudomonadati</taxon>
        <taxon>Pseudomonadota</taxon>
        <taxon>Gammaproteobacteria</taxon>
        <taxon>Enterobacterales</taxon>
        <taxon>Yersiniaceae</taxon>
        <taxon>Yersinia</taxon>
    </lineage>
</organism>
<proteinExistence type="inferred from homology"/>
<reference key="1">
    <citation type="journal article" date="2006" name="J. Bacteriol.">
        <title>Complete genome sequence of Yersinia pestis strains Antiqua and Nepal516: evidence of gene reduction in an emerging pathogen.</title>
        <authorList>
            <person name="Chain P.S.G."/>
            <person name="Hu P."/>
            <person name="Malfatti S.A."/>
            <person name="Radnedge L."/>
            <person name="Larimer F."/>
            <person name="Vergez L.M."/>
            <person name="Worsham P."/>
            <person name="Chu M.C."/>
            <person name="Andersen G.L."/>
        </authorList>
    </citation>
    <scope>NUCLEOTIDE SEQUENCE [LARGE SCALE GENOMIC DNA]</scope>
    <source>
        <strain>Nepal516</strain>
    </source>
</reference>
<reference key="2">
    <citation type="submission" date="2009-04" db="EMBL/GenBank/DDBJ databases">
        <title>Yersinia pestis Nepal516A whole genome shotgun sequencing project.</title>
        <authorList>
            <person name="Plunkett G. III"/>
            <person name="Anderson B.D."/>
            <person name="Baumler D.J."/>
            <person name="Burland V."/>
            <person name="Cabot E.L."/>
            <person name="Glasner J.D."/>
            <person name="Mau B."/>
            <person name="Neeno-Eckwall E."/>
            <person name="Perna N.T."/>
            <person name="Munk A.C."/>
            <person name="Tapia R."/>
            <person name="Green L.D."/>
            <person name="Rogers Y.C."/>
            <person name="Detter J.C."/>
            <person name="Bruce D.C."/>
            <person name="Brettin T.S."/>
        </authorList>
    </citation>
    <scope>NUCLEOTIDE SEQUENCE [LARGE SCALE GENOMIC DNA]</scope>
    <source>
        <strain>Nepal516</strain>
    </source>
</reference>